<protein>
    <recommendedName>
        <fullName evidence="1">Large ribosomal subunit protein bL12</fullName>
    </recommendedName>
    <alternativeName>
        <fullName evidence="2">50S ribosomal protein L7/L12</fullName>
    </alternativeName>
</protein>
<name>RL7_BURP0</name>
<proteinExistence type="inferred from homology"/>
<accession>A3P0C6</accession>
<reference key="1">
    <citation type="journal article" date="2010" name="Genome Biol. Evol.">
        <title>Continuing evolution of Burkholderia mallei through genome reduction and large-scale rearrangements.</title>
        <authorList>
            <person name="Losada L."/>
            <person name="Ronning C.M."/>
            <person name="DeShazer D."/>
            <person name="Woods D."/>
            <person name="Fedorova N."/>
            <person name="Kim H.S."/>
            <person name="Shabalina S.A."/>
            <person name="Pearson T.R."/>
            <person name="Brinkac L."/>
            <person name="Tan P."/>
            <person name="Nandi T."/>
            <person name="Crabtree J."/>
            <person name="Badger J."/>
            <person name="Beckstrom-Sternberg S."/>
            <person name="Saqib M."/>
            <person name="Schutzer S.E."/>
            <person name="Keim P."/>
            <person name="Nierman W.C."/>
        </authorList>
    </citation>
    <scope>NUCLEOTIDE SEQUENCE [LARGE SCALE GENOMIC DNA]</scope>
    <source>
        <strain>1106a</strain>
    </source>
</reference>
<sequence length="124" mass="12559">MAIAKEDILAAVEGMTVLELNELVKAFEEKFGVSAAAVAVAGPAAGGAAAAAEEKTEFTVVLAEAGSNKVAVIKAVREITGLGLKEAKDLVDGAPKPVKEGVDKASADEAKKKLEDAGAKVELK</sequence>
<dbReference type="EMBL" id="CP000572">
    <property type="protein sequence ID" value="ABN92359.1"/>
    <property type="molecule type" value="Genomic_DNA"/>
</dbReference>
<dbReference type="RefSeq" id="WP_004198366.1">
    <property type="nucleotide sequence ID" value="NC_009076.1"/>
</dbReference>
<dbReference type="SMR" id="A3P0C6"/>
<dbReference type="GeneID" id="93061842"/>
<dbReference type="KEGG" id="bpl:BURPS1106A_3817"/>
<dbReference type="HOGENOM" id="CLU_086499_3_2_4"/>
<dbReference type="Proteomes" id="UP000006738">
    <property type="component" value="Chromosome I"/>
</dbReference>
<dbReference type="GO" id="GO:0022625">
    <property type="term" value="C:cytosolic large ribosomal subunit"/>
    <property type="evidence" value="ECO:0007669"/>
    <property type="project" value="TreeGrafter"/>
</dbReference>
<dbReference type="GO" id="GO:0003729">
    <property type="term" value="F:mRNA binding"/>
    <property type="evidence" value="ECO:0007669"/>
    <property type="project" value="TreeGrafter"/>
</dbReference>
<dbReference type="GO" id="GO:0003735">
    <property type="term" value="F:structural constituent of ribosome"/>
    <property type="evidence" value="ECO:0007669"/>
    <property type="project" value="InterPro"/>
</dbReference>
<dbReference type="GO" id="GO:0006412">
    <property type="term" value="P:translation"/>
    <property type="evidence" value="ECO:0007669"/>
    <property type="project" value="UniProtKB-UniRule"/>
</dbReference>
<dbReference type="CDD" id="cd00387">
    <property type="entry name" value="Ribosomal_L7_L12"/>
    <property type="match status" value="1"/>
</dbReference>
<dbReference type="FunFam" id="3.30.1390.10:FF:000001">
    <property type="entry name" value="50S ribosomal protein L7/L12"/>
    <property type="match status" value="1"/>
</dbReference>
<dbReference type="Gene3D" id="3.30.1390.10">
    <property type="match status" value="1"/>
</dbReference>
<dbReference type="Gene3D" id="1.20.5.710">
    <property type="entry name" value="Single helix bin"/>
    <property type="match status" value="1"/>
</dbReference>
<dbReference type="HAMAP" id="MF_00368">
    <property type="entry name" value="Ribosomal_bL12"/>
    <property type="match status" value="1"/>
</dbReference>
<dbReference type="InterPro" id="IPR000206">
    <property type="entry name" value="Ribosomal_bL12"/>
</dbReference>
<dbReference type="InterPro" id="IPR013823">
    <property type="entry name" value="Ribosomal_bL12_C"/>
</dbReference>
<dbReference type="InterPro" id="IPR014719">
    <property type="entry name" value="Ribosomal_bL12_C/ClpS-like"/>
</dbReference>
<dbReference type="InterPro" id="IPR008932">
    <property type="entry name" value="Ribosomal_bL12_oligo"/>
</dbReference>
<dbReference type="InterPro" id="IPR036235">
    <property type="entry name" value="Ribosomal_bL12_oligo_N_sf"/>
</dbReference>
<dbReference type="NCBIfam" id="TIGR00855">
    <property type="entry name" value="L12"/>
    <property type="match status" value="1"/>
</dbReference>
<dbReference type="PANTHER" id="PTHR45987">
    <property type="entry name" value="39S RIBOSOMAL PROTEIN L12"/>
    <property type="match status" value="1"/>
</dbReference>
<dbReference type="PANTHER" id="PTHR45987:SF4">
    <property type="entry name" value="LARGE RIBOSOMAL SUBUNIT PROTEIN BL12M"/>
    <property type="match status" value="1"/>
</dbReference>
<dbReference type="Pfam" id="PF00542">
    <property type="entry name" value="Ribosomal_L12"/>
    <property type="match status" value="1"/>
</dbReference>
<dbReference type="Pfam" id="PF16320">
    <property type="entry name" value="Ribosomal_L12_N"/>
    <property type="match status" value="1"/>
</dbReference>
<dbReference type="SUPFAM" id="SSF54736">
    <property type="entry name" value="ClpS-like"/>
    <property type="match status" value="1"/>
</dbReference>
<dbReference type="SUPFAM" id="SSF48300">
    <property type="entry name" value="Ribosomal protein L7/12, oligomerisation (N-terminal) domain"/>
    <property type="match status" value="1"/>
</dbReference>
<comment type="function">
    <text evidence="1">Forms part of the ribosomal stalk which helps the ribosome interact with GTP-bound translation factors. Is thus essential for accurate translation.</text>
</comment>
<comment type="subunit">
    <text evidence="1">Homodimer. Part of the ribosomal stalk of the 50S ribosomal subunit. Forms a multimeric L10(L12)X complex, where L10 forms an elongated spine to which 2 to 4 L12 dimers bind in a sequential fashion. Binds GTP-bound translation factors.</text>
</comment>
<comment type="similarity">
    <text evidence="1">Belongs to the bacterial ribosomal protein bL12 family.</text>
</comment>
<feature type="chain" id="PRO_1000006974" description="Large ribosomal subunit protein bL12">
    <location>
        <begin position="1"/>
        <end position="124"/>
    </location>
</feature>
<keyword id="KW-0687">Ribonucleoprotein</keyword>
<keyword id="KW-0689">Ribosomal protein</keyword>
<gene>
    <name evidence="1" type="primary">rplL</name>
    <name type="ordered locus">BURPS1106A_3817</name>
</gene>
<evidence type="ECO:0000255" key="1">
    <source>
        <dbReference type="HAMAP-Rule" id="MF_00368"/>
    </source>
</evidence>
<evidence type="ECO:0000305" key="2"/>
<organism>
    <name type="scientific">Burkholderia pseudomallei (strain 1106a)</name>
    <dbReference type="NCBI Taxonomy" id="357348"/>
    <lineage>
        <taxon>Bacteria</taxon>
        <taxon>Pseudomonadati</taxon>
        <taxon>Pseudomonadota</taxon>
        <taxon>Betaproteobacteria</taxon>
        <taxon>Burkholderiales</taxon>
        <taxon>Burkholderiaceae</taxon>
        <taxon>Burkholderia</taxon>
        <taxon>pseudomallei group</taxon>
    </lineage>
</organism>